<proteinExistence type="inferred from homology"/>
<comment type="function">
    <text evidence="1">Cell division protein that is part of the divisome complex and is recruited early to the Z-ring. Probably stimulates Z-ring formation, perhaps through the cross-linking of FtsZ protofilaments. Its function overlaps with FtsA.</text>
</comment>
<comment type="subunit">
    <text evidence="1">Homodimer. Interacts with FtsZ.</text>
</comment>
<comment type="subcellular location">
    <subcellularLocation>
        <location evidence="1">Cytoplasm</location>
    </subcellularLocation>
    <text evidence="1">Localizes to the division site, in a FtsZ-dependent manner.</text>
</comment>
<comment type="similarity">
    <text evidence="1">Belongs to the SepF family.</text>
</comment>
<gene>
    <name evidence="1" type="primary">sepF2</name>
    <name type="ordered locus">SAV_6127</name>
</gene>
<sequence>MAGAMRKMAVYLGLVEDDGYDGRGFDPDDDFEPELDPEPERDRRRHEPPHQSHQALHPQRDESVRVVQPPMQRDPVPHSASLPAESVRPARIAPVASITQERQSLEKNAPVIMPKVVSEREPYRITTLHPRTYNEARTIGEHFREGTPVIMNLTEMDDTDAKRLVDFAAGLVFGLHGSIERVTQKVFLLSPANVDVTAEDKARIAEGGFFNQS</sequence>
<feature type="chain" id="PRO_0000334116" description="Cell division protein SepF 2">
    <location>
        <begin position="1"/>
        <end position="213"/>
    </location>
</feature>
<feature type="region of interest" description="Disordered" evidence="2">
    <location>
        <begin position="16"/>
        <end position="63"/>
    </location>
</feature>
<feature type="compositionally biased region" description="Acidic residues" evidence="2">
    <location>
        <begin position="27"/>
        <end position="39"/>
    </location>
</feature>
<evidence type="ECO:0000255" key="1">
    <source>
        <dbReference type="HAMAP-Rule" id="MF_01197"/>
    </source>
</evidence>
<evidence type="ECO:0000256" key="2">
    <source>
        <dbReference type="SAM" id="MobiDB-lite"/>
    </source>
</evidence>
<keyword id="KW-0131">Cell cycle</keyword>
<keyword id="KW-0132">Cell division</keyword>
<keyword id="KW-0963">Cytoplasm</keyword>
<keyword id="KW-1185">Reference proteome</keyword>
<keyword id="KW-0717">Septation</keyword>
<protein>
    <recommendedName>
        <fullName evidence="1">Cell division protein SepF 2</fullName>
    </recommendedName>
</protein>
<dbReference type="EMBL" id="BA000030">
    <property type="protein sequence ID" value="BAC73838.1"/>
    <property type="molecule type" value="Genomic_DNA"/>
</dbReference>
<dbReference type="RefSeq" id="WP_010987528.1">
    <property type="nucleotide sequence ID" value="NZ_JZJK01000089.1"/>
</dbReference>
<dbReference type="SMR" id="Q82AD2"/>
<dbReference type="GeneID" id="41543204"/>
<dbReference type="KEGG" id="sma:SAVERM_6127"/>
<dbReference type="eggNOG" id="COG1799">
    <property type="taxonomic scope" value="Bacteria"/>
</dbReference>
<dbReference type="HOGENOM" id="CLU_078499_0_0_11"/>
<dbReference type="OrthoDB" id="3731101at2"/>
<dbReference type="Proteomes" id="UP000000428">
    <property type="component" value="Chromosome"/>
</dbReference>
<dbReference type="GO" id="GO:0005737">
    <property type="term" value="C:cytoplasm"/>
    <property type="evidence" value="ECO:0007669"/>
    <property type="project" value="UniProtKB-SubCell"/>
</dbReference>
<dbReference type="GO" id="GO:0000917">
    <property type="term" value="P:division septum assembly"/>
    <property type="evidence" value="ECO:0007669"/>
    <property type="project" value="UniProtKB-KW"/>
</dbReference>
<dbReference type="GO" id="GO:0043093">
    <property type="term" value="P:FtsZ-dependent cytokinesis"/>
    <property type="evidence" value="ECO:0007669"/>
    <property type="project" value="UniProtKB-UniRule"/>
</dbReference>
<dbReference type="Gene3D" id="3.30.110.150">
    <property type="entry name" value="SepF-like protein"/>
    <property type="match status" value="1"/>
</dbReference>
<dbReference type="HAMAP" id="MF_01197">
    <property type="entry name" value="SepF"/>
    <property type="match status" value="1"/>
</dbReference>
<dbReference type="InterPro" id="IPR023052">
    <property type="entry name" value="Cell_div_SepF"/>
</dbReference>
<dbReference type="InterPro" id="IPR007561">
    <property type="entry name" value="Cell_div_SepF/SepF-rel"/>
</dbReference>
<dbReference type="InterPro" id="IPR038594">
    <property type="entry name" value="SepF-like_sf"/>
</dbReference>
<dbReference type="PANTHER" id="PTHR35798">
    <property type="entry name" value="CELL DIVISION PROTEIN SEPF"/>
    <property type="match status" value="1"/>
</dbReference>
<dbReference type="PANTHER" id="PTHR35798:SF1">
    <property type="entry name" value="CELL DIVISION PROTEIN SEPF"/>
    <property type="match status" value="1"/>
</dbReference>
<dbReference type="Pfam" id="PF04472">
    <property type="entry name" value="SepF"/>
    <property type="match status" value="1"/>
</dbReference>
<accession>Q82AD2</accession>
<organism>
    <name type="scientific">Streptomyces avermitilis (strain ATCC 31267 / DSM 46492 / JCM 5070 / NBRC 14893 / NCIMB 12804 / NRRL 8165 / MA-4680)</name>
    <dbReference type="NCBI Taxonomy" id="227882"/>
    <lineage>
        <taxon>Bacteria</taxon>
        <taxon>Bacillati</taxon>
        <taxon>Actinomycetota</taxon>
        <taxon>Actinomycetes</taxon>
        <taxon>Kitasatosporales</taxon>
        <taxon>Streptomycetaceae</taxon>
        <taxon>Streptomyces</taxon>
    </lineage>
</organism>
<reference key="1">
    <citation type="journal article" date="2003" name="Nat. Biotechnol.">
        <title>Complete genome sequence and comparative analysis of the industrial microorganism Streptomyces avermitilis.</title>
        <authorList>
            <person name="Ikeda H."/>
            <person name="Ishikawa J."/>
            <person name="Hanamoto A."/>
            <person name="Shinose M."/>
            <person name="Kikuchi H."/>
            <person name="Shiba T."/>
            <person name="Sakaki Y."/>
            <person name="Hattori M."/>
            <person name="Omura S."/>
        </authorList>
    </citation>
    <scope>NUCLEOTIDE SEQUENCE [LARGE SCALE GENOMIC DNA]</scope>
    <source>
        <strain>ATCC 31267 / DSM 46492 / JCM 5070 / NBRC 14893 / NCIMB 12804 / NRRL 8165 / MA-4680</strain>
    </source>
</reference>
<reference key="2">
    <citation type="journal article" date="2001" name="Proc. Natl. Acad. Sci. U.S.A.">
        <title>Genome sequence of an industrial microorganism Streptomyces avermitilis: deducing the ability of producing secondary metabolites.</title>
        <authorList>
            <person name="Omura S."/>
            <person name="Ikeda H."/>
            <person name="Ishikawa J."/>
            <person name="Hanamoto A."/>
            <person name="Takahashi C."/>
            <person name="Shinose M."/>
            <person name="Takahashi Y."/>
            <person name="Horikawa H."/>
            <person name="Nakazawa H."/>
            <person name="Osonoe T."/>
            <person name="Kikuchi H."/>
            <person name="Shiba T."/>
            <person name="Sakaki Y."/>
            <person name="Hattori M."/>
        </authorList>
    </citation>
    <scope>NUCLEOTIDE SEQUENCE [LARGE SCALE GENOMIC DNA]</scope>
    <source>
        <strain>ATCC 31267 / DSM 46492 / JCM 5070 / NBRC 14893 / NCIMB 12804 / NRRL 8165 / MA-4680</strain>
    </source>
</reference>
<name>SEPF2_STRAW</name>